<organism>
    <name type="scientific">Nostoc punctiforme (strain ATCC 29133 / PCC 73102)</name>
    <dbReference type="NCBI Taxonomy" id="63737"/>
    <lineage>
        <taxon>Bacteria</taxon>
        <taxon>Bacillati</taxon>
        <taxon>Cyanobacteriota</taxon>
        <taxon>Cyanophyceae</taxon>
        <taxon>Nostocales</taxon>
        <taxon>Nostocaceae</taxon>
        <taxon>Nostoc</taxon>
    </lineage>
</organism>
<keyword id="KW-0028">Amino-acid biosynthesis</keyword>
<keyword id="KW-0963">Cytoplasm</keyword>
<keyword id="KW-0220">Diaminopimelate biosynthesis</keyword>
<keyword id="KW-0456">Lyase</keyword>
<keyword id="KW-0457">Lysine biosynthesis</keyword>
<keyword id="KW-1185">Reference proteome</keyword>
<keyword id="KW-0704">Schiff base</keyword>
<name>DAPA_NOSP7</name>
<reference key="1">
    <citation type="journal article" date="2013" name="Plant Physiol.">
        <title>A Nostoc punctiforme Sugar Transporter Necessary to Establish a Cyanobacterium-Plant Symbiosis.</title>
        <authorList>
            <person name="Ekman M."/>
            <person name="Picossi S."/>
            <person name="Campbell E.L."/>
            <person name="Meeks J.C."/>
            <person name="Flores E."/>
        </authorList>
    </citation>
    <scope>NUCLEOTIDE SEQUENCE [LARGE SCALE GENOMIC DNA]</scope>
    <source>
        <strain>ATCC 29133 / PCC 73102</strain>
    </source>
</reference>
<accession>B2IT87</accession>
<protein>
    <recommendedName>
        <fullName evidence="1">4-hydroxy-tetrahydrodipicolinate synthase</fullName>
        <shortName evidence="1">HTPA synthase</shortName>
        <ecNumber evidence="1">4.3.3.7</ecNumber>
    </recommendedName>
</protein>
<proteinExistence type="inferred from homology"/>
<comment type="function">
    <text evidence="1">Catalyzes the condensation of (S)-aspartate-beta-semialdehyde [(S)-ASA] and pyruvate to 4-hydroxy-tetrahydrodipicolinate (HTPA).</text>
</comment>
<comment type="catalytic activity">
    <reaction evidence="1">
        <text>L-aspartate 4-semialdehyde + pyruvate = (2S,4S)-4-hydroxy-2,3,4,5-tetrahydrodipicolinate + H2O + H(+)</text>
        <dbReference type="Rhea" id="RHEA:34171"/>
        <dbReference type="ChEBI" id="CHEBI:15361"/>
        <dbReference type="ChEBI" id="CHEBI:15377"/>
        <dbReference type="ChEBI" id="CHEBI:15378"/>
        <dbReference type="ChEBI" id="CHEBI:67139"/>
        <dbReference type="ChEBI" id="CHEBI:537519"/>
        <dbReference type="EC" id="4.3.3.7"/>
    </reaction>
</comment>
<comment type="pathway">
    <text evidence="1">Amino-acid biosynthesis; L-lysine biosynthesis via DAP pathway; (S)-tetrahydrodipicolinate from L-aspartate: step 3/4.</text>
</comment>
<comment type="subunit">
    <text evidence="1">Homotetramer; dimer of dimers.</text>
</comment>
<comment type="subcellular location">
    <subcellularLocation>
        <location evidence="1">Cytoplasm</location>
    </subcellularLocation>
</comment>
<comment type="similarity">
    <text evidence="1">Belongs to the DapA family.</text>
</comment>
<comment type="caution">
    <text evidence="2">Was originally thought to be a dihydrodipicolinate synthase (DHDPS), catalyzing the condensation of (S)-aspartate-beta-semialdehyde [(S)-ASA] and pyruvate to dihydrodipicolinate (DHDP). However, it was shown in E.coli that the product of the enzymatic reaction is not dihydrodipicolinate but in fact (4S)-4-hydroxy-2,3,4,5-tetrahydro-(2S)-dipicolinic acid (HTPA), and that the consecutive dehydration reaction leading to DHDP is not spontaneous but catalyzed by DapB.</text>
</comment>
<sequence>MGDFGNVLTAMITPFKADGSVDYGVAAELAVHLANNGTDTLVMCGTTGESPTLSWDEEYQLFVEVLQSVAGKAKVIAGCGSNSTKEAIAATQKASKIGVHGSLQVVPYYNKPPQAGLEAHFQAIAQACPDLPLLLYNVPGRTGQNLQPETVARLAEVSNIVGIKESTGSIDQASEIRRLTPKEFHIYSGDDYMTLPLLAIGAKGVVSVASHLVGNQLQQMIQAFSAGKIEVARDIHLQLFPLFKALFLTSNPIPVKKALKLQGWEVGSTRPPLCEADLEVSQKLEGVLKELSLI</sequence>
<feature type="chain" id="PRO_1000124053" description="4-hydroxy-tetrahydrodipicolinate synthase">
    <location>
        <begin position="1"/>
        <end position="294"/>
    </location>
</feature>
<feature type="active site" description="Proton donor/acceptor" evidence="1">
    <location>
        <position position="136"/>
    </location>
</feature>
<feature type="active site" description="Schiff-base intermediate with substrate" evidence="1">
    <location>
        <position position="164"/>
    </location>
</feature>
<feature type="binding site" evidence="1">
    <location>
        <position position="47"/>
    </location>
    <ligand>
        <name>pyruvate</name>
        <dbReference type="ChEBI" id="CHEBI:15361"/>
    </ligand>
</feature>
<feature type="binding site" evidence="1">
    <location>
        <position position="206"/>
    </location>
    <ligand>
        <name>pyruvate</name>
        <dbReference type="ChEBI" id="CHEBI:15361"/>
    </ligand>
</feature>
<feature type="site" description="Part of a proton relay during catalysis" evidence="1">
    <location>
        <position position="46"/>
    </location>
</feature>
<feature type="site" description="Part of a proton relay during catalysis" evidence="1">
    <location>
        <position position="109"/>
    </location>
</feature>
<evidence type="ECO:0000255" key="1">
    <source>
        <dbReference type="HAMAP-Rule" id="MF_00418"/>
    </source>
</evidence>
<evidence type="ECO:0000305" key="2"/>
<dbReference type="EC" id="4.3.3.7" evidence="1"/>
<dbReference type="EMBL" id="CP001037">
    <property type="protein sequence ID" value="ACC79585.1"/>
    <property type="molecule type" value="Genomic_DNA"/>
</dbReference>
<dbReference type="RefSeq" id="WP_012407607.1">
    <property type="nucleotide sequence ID" value="NC_010628.1"/>
</dbReference>
<dbReference type="SMR" id="B2IT87"/>
<dbReference type="STRING" id="63737.Npun_R0847"/>
<dbReference type="EnsemblBacteria" id="ACC79585">
    <property type="protein sequence ID" value="ACC79585"/>
    <property type="gene ID" value="Npun_R0847"/>
</dbReference>
<dbReference type="KEGG" id="npu:Npun_R0847"/>
<dbReference type="eggNOG" id="COG0329">
    <property type="taxonomic scope" value="Bacteria"/>
</dbReference>
<dbReference type="HOGENOM" id="CLU_049343_7_1_3"/>
<dbReference type="OrthoDB" id="9782828at2"/>
<dbReference type="PhylomeDB" id="B2IT87"/>
<dbReference type="UniPathway" id="UPA00034">
    <property type="reaction ID" value="UER00017"/>
</dbReference>
<dbReference type="Proteomes" id="UP000001191">
    <property type="component" value="Chromosome"/>
</dbReference>
<dbReference type="GO" id="GO:0005829">
    <property type="term" value="C:cytosol"/>
    <property type="evidence" value="ECO:0007669"/>
    <property type="project" value="TreeGrafter"/>
</dbReference>
<dbReference type="GO" id="GO:0008840">
    <property type="term" value="F:4-hydroxy-tetrahydrodipicolinate synthase activity"/>
    <property type="evidence" value="ECO:0007669"/>
    <property type="project" value="UniProtKB-UniRule"/>
</dbReference>
<dbReference type="GO" id="GO:0019877">
    <property type="term" value="P:diaminopimelate biosynthetic process"/>
    <property type="evidence" value="ECO:0007669"/>
    <property type="project" value="UniProtKB-UniRule"/>
</dbReference>
<dbReference type="GO" id="GO:0009089">
    <property type="term" value="P:lysine biosynthetic process via diaminopimelate"/>
    <property type="evidence" value="ECO:0007669"/>
    <property type="project" value="UniProtKB-UniRule"/>
</dbReference>
<dbReference type="CDD" id="cd00950">
    <property type="entry name" value="DHDPS"/>
    <property type="match status" value="1"/>
</dbReference>
<dbReference type="Gene3D" id="3.20.20.70">
    <property type="entry name" value="Aldolase class I"/>
    <property type="match status" value="1"/>
</dbReference>
<dbReference type="HAMAP" id="MF_00418">
    <property type="entry name" value="DapA"/>
    <property type="match status" value="1"/>
</dbReference>
<dbReference type="InterPro" id="IPR013785">
    <property type="entry name" value="Aldolase_TIM"/>
</dbReference>
<dbReference type="InterPro" id="IPR005263">
    <property type="entry name" value="DapA"/>
</dbReference>
<dbReference type="InterPro" id="IPR002220">
    <property type="entry name" value="DapA-like"/>
</dbReference>
<dbReference type="InterPro" id="IPR020625">
    <property type="entry name" value="Schiff_base-form_aldolases_AS"/>
</dbReference>
<dbReference type="NCBIfam" id="TIGR00674">
    <property type="entry name" value="dapA"/>
    <property type="match status" value="1"/>
</dbReference>
<dbReference type="PANTHER" id="PTHR12128:SF66">
    <property type="entry name" value="4-HYDROXY-2-OXOGLUTARATE ALDOLASE, MITOCHONDRIAL"/>
    <property type="match status" value="1"/>
</dbReference>
<dbReference type="PANTHER" id="PTHR12128">
    <property type="entry name" value="DIHYDRODIPICOLINATE SYNTHASE"/>
    <property type="match status" value="1"/>
</dbReference>
<dbReference type="Pfam" id="PF00701">
    <property type="entry name" value="DHDPS"/>
    <property type="match status" value="1"/>
</dbReference>
<dbReference type="PIRSF" id="PIRSF001365">
    <property type="entry name" value="DHDPS"/>
    <property type="match status" value="1"/>
</dbReference>
<dbReference type="PRINTS" id="PR00146">
    <property type="entry name" value="DHPICSNTHASE"/>
</dbReference>
<dbReference type="SMART" id="SM01130">
    <property type="entry name" value="DHDPS"/>
    <property type="match status" value="1"/>
</dbReference>
<dbReference type="SUPFAM" id="SSF51569">
    <property type="entry name" value="Aldolase"/>
    <property type="match status" value="1"/>
</dbReference>
<dbReference type="PROSITE" id="PS00666">
    <property type="entry name" value="DHDPS_2"/>
    <property type="match status" value="1"/>
</dbReference>
<gene>
    <name evidence="1" type="primary">dapA</name>
    <name type="ordered locus">Npun_R0847</name>
</gene>